<accession>Q8YEP2</accession>
<feature type="chain" id="PRO_0000205821" description="Nicotinate phosphoribosyltransferase">
    <location>
        <begin position="1"/>
        <end position="434"/>
    </location>
</feature>
<feature type="modified residue" description="Phosphohistidine; by autocatalysis" evidence="1">
    <location>
        <position position="242"/>
    </location>
</feature>
<proteinExistence type="inferred from homology"/>
<sequence>MAKTDLARRVYNHTWKLDPIIRSLLDTDFYKLLMLQMIWGLYPRVDATFSLINRTSSVRLADEIDEGELRAQLDHARTLRFSKKEMIWLAGNTFYGRKQIFQPEFLAWLHDCQLPEYELRRKDGQYELHFHGPWTHTTMWEIPALAIINELRSRAAMKNLGPFSLDVLYARAKAKMWSKVERLRQLPDLKISDFGTRRRHSFLWQRWCVEALKEGIGSAFTGTSNVLLAMDTDLEALGTNAHELPMVLAALAKTDDELRSAPYRVLQDWNRYYGGNLLIVLPDAFGTAAFLRNAPDWVADWTGFRPDSAPPIEGGERIIEWWKSKGKDPREKLLIFSDALDVDTIEETYRHFEGRVRMGFGWGTNLTNDFAGCAPQSIDGLKAISLVCKVTDANGHPAVKLSDNPQKATGDPKEVARYLRFFGNEERVEQLVRV</sequence>
<protein>
    <recommendedName>
        <fullName evidence="1">Nicotinate phosphoribosyltransferase</fullName>
        <shortName evidence="1">NAPRTase</shortName>
        <ecNumber evidence="1">6.3.4.21</ecNumber>
    </recommendedName>
</protein>
<gene>
    <name evidence="1" type="primary">pncB</name>
    <name type="ordered locus">BMEI1836</name>
</gene>
<evidence type="ECO:0000255" key="1">
    <source>
        <dbReference type="HAMAP-Rule" id="MF_00570"/>
    </source>
</evidence>
<keyword id="KW-0436">Ligase</keyword>
<keyword id="KW-0597">Phosphoprotein</keyword>
<keyword id="KW-0662">Pyridine nucleotide biosynthesis</keyword>
<organism>
    <name type="scientific">Brucella melitensis biotype 1 (strain ATCC 23456 / CCUG 17765 / NCTC 10094 / 16M)</name>
    <dbReference type="NCBI Taxonomy" id="224914"/>
    <lineage>
        <taxon>Bacteria</taxon>
        <taxon>Pseudomonadati</taxon>
        <taxon>Pseudomonadota</taxon>
        <taxon>Alphaproteobacteria</taxon>
        <taxon>Hyphomicrobiales</taxon>
        <taxon>Brucellaceae</taxon>
        <taxon>Brucella/Ochrobactrum group</taxon>
        <taxon>Brucella</taxon>
    </lineage>
</organism>
<reference key="1">
    <citation type="journal article" date="2002" name="Proc. Natl. Acad. Sci. U.S.A.">
        <title>The genome sequence of the facultative intracellular pathogen Brucella melitensis.</title>
        <authorList>
            <person name="DelVecchio V.G."/>
            <person name="Kapatral V."/>
            <person name="Redkar R.J."/>
            <person name="Patra G."/>
            <person name="Mujer C."/>
            <person name="Los T."/>
            <person name="Ivanova N."/>
            <person name="Anderson I."/>
            <person name="Bhattacharyya A."/>
            <person name="Lykidis A."/>
            <person name="Reznik G."/>
            <person name="Jablonski L."/>
            <person name="Larsen N."/>
            <person name="D'Souza M."/>
            <person name="Bernal A."/>
            <person name="Mazur M."/>
            <person name="Goltsman E."/>
            <person name="Selkov E."/>
            <person name="Elzer P.H."/>
            <person name="Hagius S."/>
            <person name="O'Callaghan D."/>
            <person name="Letesson J.-J."/>
            <person name="Haselkorn R."/>
            <person name="Kyrpides N.C."/>
            <person name="Overbeek R."/>
        </authorList>
    </citation>
    <scope>NUCLEOTIDE SEQUENCE [LARGE SCALE GENOMIC DNA]</scope>
    <source>
        <strain>ATCC 23456 / CCUG 17765 / NCTC 10094 / 16M</strain>
    </source>
</reference>
<comment type="function">
    <text evidence="1">Catalyzes the synthesis of beta-nicotinate D-ribonucleotide from nicotinate and 5-phospho-D-ribose 1-phosphate at the expense of ATP.</text>
</comment>
<comment type="catalytic activity">
    <reaction evidence="1">
        <text>nicotinate + 5-phospho-alpha-D-ribose 1-diphosphate + ATP + H2O = nicotinate beta-D-ribonucleotide + ADP + phosphate + diphosphate</text>
        <dbReference type="Rhea" id="RHEA:36163"/>
        <dbReference type="ChEBI" id="CHEBI:15377"/>
        <dbReference type="ChEBI" id="CHEBI:30616"/>
        <dbReference type="ChEBI" id="CHEBI:32544"/>
        <dbReference type="ChEBI" id="CHEBI:33019"/>
        <dbReference type="ChEBI" id="CHEBI:43474"/>
        <dbReference type="ChEBI" id="CHEBI:57502"/>
        <dbReference type="ChEBI" id="CHEBI:58017"/>
        <dbReference type="ChEBI" id="CHEBI:456216"/>
        <dbReference type="EC" id="6.3.4.21"/>
    </reaction>
</comment>
<comment type="pathway">
    <text evidence="1">Cofactor biosynthesis; NAD(+) biosynthesis; nicotinate D-ribonucleotide from nicotinate: step 1/1.</text>
</comment>
<comment type="PTM">
    <text evidence="1">Transiently phosphorylated on a His residue during the reaction cycle. Phosphorylation strongly increases the affinity for substrates and increases the rate of nicotinate D-ribonucleotide production. Dephosphorylation regenerates the low-affinity form of the enzyme, leading to product release.</text>
</comment>
<comment type="similarity">
    <text evidence="1">Belongs to the NAPRTase family.</text>
</comment>
<name>PNCB_BRUME</name>
<dbReference type="EC" id="6.3.4.21" evidence="1"/>
<dbReference type="EMBL" id="AE008917">
    <property type="protein sequence ID" value="AAL53017.1"/>
    <property type="molecule type" value="Genomic_DNA"/>
</dbReference>
<dbReference type="PIR" id="AF3481">
    <property type="entry name" value="AF3481"/>
</dbReference>
<dbReference type="RefSeq" id="WP_004684655.1">
    <property type="nucleotide sequence ID" value="NZ_GG703778.1"/>
</dbReference>
<dbReference type="SMR" id="Q8YEP2"/>
<dbReference type="GeneID" id="29594709"/>
<dbReference type="KEGG" id="bme:BMEI1836"/>
<dbReference type="KEGG" id="bmel:DK63_1653"/>
<dbReference type="PATRIC" id="fig|224914.52.peg.1746"/>
<dbReference type="eggNOG" id="COG1488">
    <property type="taxonomic scope" value="Bacteria"/>
</dbReference>
<dbReference type="PhylomeDB" id="Q8YEP2"/>
<dbReference type="UniPathway" id="UPA00253">
    <property type="reaction ID" value="UER00457"/>
</dbReference>
<dbReference type="Proteomes" id="UP000000419">
    <property type="component" value="Chromosome I"/>
</dbReference>
<dbReference type="GO" id="GO:0005829">
    <property type="term" value="C:cytosol"/>
    <property type="evidence" value="ECO:0007669"/>
    <property type="project" value="TreeGrafter"/>
</dbReference>
<dbReference type="GO" id="GO:0004516">
    <property type="term" value="F:nicotinate phosphoribosyltransferase activity"/>
    <property type="evidence" value="ECO:0007669"/>
    <property type="project" value="UniProtKB-UniRule"/>
</dbReference>
<dbReference type="GO" id="GO:0034355">
    <property type="term" value="P:NAD biosynthetic process via the salvage pathway"/>
    <property type="evidence" value="ECO:0007669"/>
    <property type="project" value="TreeGrafter"/>
</dbReference>
<dbReference type="Gene3D" id="3.20.140.10">
    <property type="entry name" value="nicotinate phosphoribosyltransferase"/>
    <property type="match status" value="1"/>
</dbReference>
<dbReference type="HAMAP" id="MF_00570">
    <property type="entry name" value="NAPRTase"/>
    <property type="match status" value="1"/>
</dbReference>
<dbReference type="InterPro" id="IPR041525">
    <property type="entry name" value="N/Namide_PRibTrfase"/>
</dbReference>
<dbReference type="InterPro" id="IPR040727">
    <property type="entry name" value="NAPRTase_N"/>
</dbReference>
<dbReference type="InterPro" id="IPR006406">
    <property type="entry name" value="Nic_PRibTrfase"/>
</dbReference>
<dbReference type="InterPro" id="IPR007229">
    <property type="entry name" value="Nic_PRibTrfase-Fam"/>
</dbReference>
<dbReference type="InterPro" id="IPR036068">
    <property type="entry name" value="Nicotinate_pribotase-like_C"/>
</dbReference>
<dbReference type="NCBIfam" id="TIGR01514">
    <property type="entry name" value="NAPRTase"/>
    <property type="match status" value="1"/>
</dbReference>
<dbReference type="NCBIfam" id="NF003704">
    <property type="entry name" value="PRK05321.1"/>
    <property type="match status" value="1"/>
</dbReference>
<dbReference type="PANTHER" id="PTHR11098">
    <property type="entry name" value="NICOTINATE PHOSPHORIBOSYLTRANSFERASE"/>
    <property type="match status" value="1"/>
</dbReference>
<dbReference type="PANTHER" id="PTHR11098:SF1">
    <property type="entry name" value="NICOTINATE PHOSPHORIBOSYLTRANSFERASE"/>
    <property type="match status" value="1"/>
</dbReference>
<dbReference type="Pfam" id="PF04095">
    <property type="entry name" value="NAPRTase"/>
    <property type="match status" value="1"/>
</dbReference>
<dbReference type="Pfam" id="PF17767">
    <property type="entry name" value="NAPRTase_N"/>
    <property type="match status" value="1"/>
</dbReference>
<dbReference type="PIRSF" id="PIRSF000484">
    <property type="entry name" value="NAPRT"/>
    <property type="match status" value="1"/>
</dbReference>
<dbReference type="SUPFAM" id="SSF51690">
    <property type="entry name" value="Nicotinate/Quinolinate PRTase C-terminal domain-like"/>
    <property type="match status" value="1"/>
</dbReference>
<dbReference type="SUPFAM" id="SSF54675">
    <property type="entry name" value="Nicotinate/Quinolinate PRTase N-terminal domain-like"/>
    <property type="match status" value="1"/>
</dbReference>